<dbReference type="EC" id="3.6.5.3" evidence="2"/>
<dbReference type="EMBL" id="CP000437">
    <property type="protein sequence ID" value="ABI83466.1"/>
    <property type="molecule type" value="Genomic_DNA"/>
</dbReference>
<dbReference type="RefSeq" id="WP_003024794.1">
    <property type="nucleotide sequence ID" value="NC_017463.1"/>
</dbReference>
<dbReference type="SMR" id="Q0BKB8"/>
<dbReference type="KEGG" id="fth:FTH_1691"/>
<dbReference type="GO" id="GO:0005829">
    <property type="term" value="C:cytosol"/>
    <property type="evidence" value="ECO:0007669"/>
    <property type="project" value="TreeGrafter"/>
</dbReference>
<dbReference type="GO" id="GO:0005525">
    <property type="term" value="F:GTP binding"/>
    <property type="evidence" value="ECO:0007669"/>
    <property type="project" value="UniProtKB-UniRule"/>
</dbReference>
<dbReference type="GO" id="GO:0003924">
    <property type="term" value="F:GTPase activity"/>
    <property type="evidence" value="ECO:0007669"/>
    <property type="project" value="InterPro"/>
</dbReference>
<dbReference type="GO" id="GO:0097216">
    <property type="term" value="F:guanosine tetraphosphate binding"/>
    <property type="evidence" value="ECO:0007669"/>
    <property type="project" value="UniProtKB-ARBA"/>
</dbReference>
<dbReference type="GO" id="GO:0003746">
    <property type="term" value="F:translation elongation factor activity"/>
    <property type="evidence" value="ECO:0007669"/>
    <property type="project" value="UniProtKB-UniRule"/>
</dbReference>
<dbReference type="CDD" id="cd01884">
    <property type="entry name" value="EF_Tu"/>
    <property type="match status" value="1"/>
</dbReference>
<dbReference type="CDD" id="cd03697">
    <property type="entry name" value="EFTU_II"/>
    <property type="match status" value="1"/>
</dbReference>
<dbReference type="CDD" id="cd03707">
    <property type="entry name" value="EFTU_III"/>
    <property type="match status" value="1"/>
</dbReference>
<dbReference type="FunFam" id="2.40.30.10:FF:000001">
    <property type="entry name" value="Elongation factor Tu"/>
    <property type="match status" value="1"/>
</dbReference>
<dbReference type="FunFam" id="3.40.50.300:FF:000003">
    <property type="entry name" value="Elongation factor Tu"/>
    <property type="match status" value="1"/>
</dbReference>
<dbReference type="Gene3D" id="3.40.50.300">
    <property type="entry name" value="P-loop containing nucleotide triphosphate hydrolases"/>
    <property type="match status" value="1"/>
</dbReference>
<dbReference type="Gene3D" id="2.40.30.10">
    <property type="entry name" value="Translation factors"/>
    <property type="match status" value="2"/>
</dbReference>
<dbReference type="HAMAP" id="MF_00118_B">
    <property type="entry name" value="EF_Tu_B"/>
    <property type="match status" value="1"/>
</dbReference>
<dbReference type="InterPro" id="IPR041709">
    <property type="entry name" value="EF-Tu_GTP-bd"/>
</dbReference>
<dbReference type="InterPro" id="IPR050055">
    <property type="entry name" value="EF-Tu_GTPase"/>
</dbReference>
<dbReference type="InterPro" id="IPR004161">
    <property type="entry name" value="EFTu-like_2"/>
</dbReference>
<dbReference type="InterPro" id="IPR033720">
    <property type="entry name" value="EFTU_2"/>
</dbReference>
<dbReference type="InterPro" id="IPR031157">
    <property type="entry name" value="G_TR_CS"/>
</dbReference>
<dbReference type="InterPro" id="IPR027417">
    <property type="entry name" value="P-loop_NTPase"/>
</dbReference>
<dbReference type="InterPro" id="IPR005225">
    <property type="entry name" value="Small_GTP-bd"/>
</dbReference>
<dbReference type="InterPro" id="IPR000795">
    <property type="entry name" value="T_Tr_GTP-bd_dom"/>
</dbReference>
<dbReference type="InterPro" id="IPR009000">
    <property type="entry name" value="Transl_B-barrel_sf"/>
</dbReference>
<dbReference type="InterPro" id="IPR009001">
    <property type="entry name" value="Transl_elong_EF1A/Init_IF2_C"/>
</dbReference>
<dbReference type="InterPro" id="IPR004541">
    <property type="entry name" value="Transl_elong_EFTu/EF1A_bac/org"/>
</dbReference>
<dbReference type="InterPro" id="IPR004160">
    <property type="entry name" value="Transl_elong_EFTu/EF1A_C"/>
</dbReference>
<dbReference type="NCBIfam" id="TIGR00485">
    <property type="entry name" value="EF-Tu"/>
    <property type="match status" value="1"/>
</dbReference>
<dbReference type="NCBIfam" id="NF000766">
    <property type="entry name" value="PRK00049.1"/>
    <property type="match status" value="1"/>
</dbReference>
<dbReference type="NCBIfam" id="NF009372">
    <property type="entry name" value="PRK12735.1"/>
    <property type="match status" value="1"/>
</dbReference>
<dbReference type="NCBIfam" id="NF009373">
    <property type="entry name" value="PRK12736.1"/>
    <property type="match status" value="1"/>
</dbReference>
<dbReference type="NCBIfam" id="TIGR00231">
    <property type="entry name" value="small_GTP"/>
    <property type="match status" value="1"/>
</dbReference>
<dbReference type="PANTHER" id="PTHR43721:SF22">
    <property type="entry name" value="ELONGATION FACTOR TU, MITOCHONDRIAL"/>
    <property type="match status" value="1"/>
</dbReference>
<dbReference type="PANTHER" id="PTHR43721">
    <property type="entry name" value="ELONGATION FACTOR TU-RELATED"/>
    <property type="match status" value="1"/>
</dbReference>
<dbReference type="Pfam" id="PF00009">
    <property type="entry name" value="GTP_EFTU"/>
    <property type="match status" value="1"/>
</dbReference>
<dbReference type="Pfam" id="PF03144">
    <property type="entry name" value="GTP_EFTU_D2"/>
    <property type="match status" value="1"/>
</dbReference>
<dbReference type="Pfam" id="PF03143">
    <property type="entry name" value="GTP_EFTU_D3"/>
    <property type="match status" value="1"/>
</dbReference>
<dbReference type="PRINTS" id="PR00315">
    <property type="entry name" value="ELONGATNFCT"/>
</dbReference>
<dbReference type="SUPFAM" id="SSF50465">
    <property type="entry name" value="EF-Tu/eEF-1alpha/eIF2-gamma C-terminal domain"/>
    <property type="match status" value="1"/>
</dbReference>
<dbReference type="SUPFAM" id="SSF52540">
    <property type="entry name" value="P-loop containing nucleoside triphosphate hydrolases"/>
    <property type="match status" value="1"/>
</dbReference>
<dbReference type="SUPFAM" id="SSF50447">
    <property type="entry name" value="Translation proteins"/>
    <property type="match status" value="1"/>
</dbReference>
<dbReference type="PROSITE" id="PS00301">
    <property type="entry name" value="G_TR_1"/>
    <property type="match status" value="1"/>
</dbReference>
<dbReference type="PROSITE" id="PS51722">
    <property type="entry name" value="G_TR_2"/>
    <property type="match status" value="1"/>
</dbReference>
<keyword id="KW-0963">Cytoplasm</keyword>
<keyword id="KW-0251">Elongation factor</keyword>
<keyword id="KW-0342">GTP-binding</keyword>
<keyword id="KW-0378">Hydrolase</keyword>
<keyword id="KW-0460">Magnesium</keyword>
<keyword id="KW-0479">Metal-binding</keyword>
<keyword id="KW-0547">Nucleotide-binding</keyword>
<keyword id="KW-0648">Protein biosynthesis</keyword>
<accession>Q0BKB8</accession>
<reference key="1">
    <citation type="journal article" date="2006" name="J. Bacteriol.">
        <title>Chromosome rearrangement and diversification of Francisella tularensis revealed by the type B (OSU18) genome sequence.</title>
        <authorList>
            <person name="Petrosino J.F."/>
            <person name="Xiang Q."/>
            <person name="Karpathy S.E."/>
            <person name="Jiang H."/>
            <person name="Yerrapragada S."/>
            <person name="Liu Y."/>
            <person name="Gioia J."/>
            <person name="Hemphill L."/>
            <person name="Gonzalez A."/>
            <person name="Raghavan T.M."/>
            <person name="Uzman A."/>
            <person name="Fox G.E."/>
            <person name="Highlander S."/>
            <person name="Reichard M."/>
            <person name="Morton R.J."/>
            <person name="Clinkenbeard K.D."/>
            <person name="Weinstock G.M."/>
        </authorList>
    </citation>
    <scope>NUCLEOTIDE SEQUENCE [LARGE SCALE GENOMIC DNA]</scope>
    <source>
        <strain>OSU18</strain>
    </source>
</reference>
<gene>
    <name evidence="2" type="primary">tuf</name>
    <name type="ordered locus">FTH_1691</name>
</gene>
<name>EFTU_FRATO</name>
<evidence type="ECO:0000250" key="1"/>
<evidence type="ECO:0000255" key="2">
    <source>
        <dbReference type="HAMAP-Rule" id="MF_00118"/>
    </source>
</evidence>
<feature type="chain" id="PRO_1000015663" description="Elongation factor Tu">
    <location>
        <begin position="1"/>
        <end position="394"/>
    </location>
</feature>
<feature type="domain" description="tr-type G">
    <location>
        <begin position="10"/>
        <end position="204"/>
    </location>
</feature>
<feature type="region of interest" description="G1" evidence="1">
    <location>
        <begin position="19"/>
        <end position="26"/>
    </location>
</feature>
<feature type="region of interest" description="G2" evidence="1">
    <location>
        <begin position="60"/>
        <end position="64"/>
    </location>
</feature>
<feature type="region of interest" description="G3" evidence="1">
    <location>
        <begin position="81"/>
        <end position="84"/>
    </location>
</feature>
<feature type="region of interest" description="G4" evidence="1">
    <location>
        <begin position="136"/>
        <end position="139"/>
    </location>
</feature>
<feature type="region of interest" description="G5" evidence="1">
    <location>
        <begin position="174"/>
        <end position="176"/>
    </location>
</feature>
<feature type="binding site" evidence="2">
    <location>
        <begin position="19"/>
        <end position="26"/>
    </location>
    <ligand>
        <name>GTP</name>
        <dbReference type="ChEBI" id="CHEBI:37565"/>
    </ligand>
</feature>
<feature type="binding site" evidence="2">
    <location>
        <position position="26"/>
    </location>
    <ligand>
        <name>Mg(2+)</name>
        <dbReference type="ChEBI" id="CHEBI:18420"/>
    </ligand>
</feature>
<feature type="binding site" evidence="2">
    <location>
        <begin position="81"/>
        <end position="85"/>
    </location>
    <ligand>
        <name>GTP</name>
        <dbReference type="ChEBI" id="CHEBI:37565"/>
    </ligand>
</feature>
<feature type="binding site" evidence="2">
    <location>
        <begin position="136"/>
        <end position="139"/>
    </location>
    <ligand>
        <name>GTP</name>
        <dbReference type="ChEBI" id="CHEBI:37565"/>
    </ligand>
</feature>
<sequence length="394" mass="43391">MAKEKFERSKPHVNVGTIGHVDHGKTTLTAAITKVMAEKNGGMARKFDEIDSAPEEKARGITINTSHVEYESPNRHYAHVDCPGHADYVKNMITGAAQMDGAILVCSAADGPMPQTREHILLSRQVGVPKIVVFLNKCDMVDDEELLELVEMEVRELLDQYEFPGDDTPVIMGSALRAIEGDEAYVEKIVELVQAMDDYIPAPERDTEKPFILPIEDVFSISGRGTVVTGRIERGVVNVGDEVEVVGIRPTQKTTVTGVEMFRKLLDRGEAGDNVGILVRGLKRDDVERGQVLCKPGSIKPHTKFEAEVYVLSKEEGGRHTPFFKGYRPQFYFRTTDITGAVELPEGVEMVMPGDNVKMTITLINPIAMDEGLRFAIREGGRTVGAGVVAKIIE</sequence>
<proteinExistence type="inferred from homology"/>
<organism>
    <name type="scientific">Francisella tularensis subsp. holarctica (strain OSU18)</name>
    <dbReference type="NCBI Taxonomy" id="393011"/>
    <lineage>
        <taxon>Bacteria</taxon>
        <taxon>Pseudomonadati</taxon>
        <taxon>Pseudomonadota</taxon>
        <taxon>Gammaproteobacteria</taxon>
        <taxon>Thiotrichales</taxon>
        <taxon>Francisellaceae</taxon>
        <taxon>Francisella</taxon>
    </lineage>
</organism>
<protein>
    <recommendedName>
        <fullName evidence="2">Elongation factor Tu</fullName>
        <shortName evidence="2">EF-Tu</shortName>
        <ecNumber evidence="2">3.6.5.3</ecNumber>
    </recommendedName>
</protein>
<comment type="function">
    <text evidence="2">GTP hydrolase that promotes the GTP-dependent binding of aminoacyl-tRNA to the A-site of ribosomes during protein biosynthesis.</text>
</comment>
<comment type="catalytic activity">
    <reaction evidence="2">
        <text>GTP + H2O = GDP + phosphate + H(+)</text>
        <dbReference type="Rhea" id="RHEA:19669"/>
        <dbReference type="ChEBI" id="CHEBI:15377"/>
        <dbReference type="ChEBI" id="CHEBI:15378"/>
        <dbReference type="ChEBI" id="CHEBI:37565"/>
        <dbReference type="ChEBI" id="CHEBI:43474"/>
        <dbReference type="ChEBI" id="CHEBI:58189"/>
        <dbReference type="EC" id="3.6.5.3"/>
    </reaction>
    <physiologicalReaction direction="left-to-right" evidence="2">
        <dbReference type="Rhea" id="RHEA:19670"/>
    </physiologicalReaction>
</comment>
<comment type="subunit">
    <text evidence="2">Monomer.</text>
</comment>
<comment type="subcellular location">
    <subcellularLocation>
        <location evidence="2">Cytoplasm</location>
    </subcellularLocation>
</comment>
<comment type="similarity">
    <text evidence="2">Belongs to the TRAFAC class translation factor GTPase superfamily. Classic translation factor GTPase family. EF-Tu/EF-1A subfamily.</text>
</comment>